<protein>
    <recommendedName>
        <fullName>Vacuolar fusion protein CCZ1 homolog</fullName>
    </recommendedName>
</protein>
<comment type="function">
    <text evidence="2">Acts in concert with MON1A, as a guanine exchange factor (GEF) for RAB7, promotes the exchange of GDP to GTP, converting it from an inactive GDP-bound form into an active GTP-bound form (PubMed:23084991).</text>
</comment>
<comment type="subunit">
    <text evidence="2 3">Interacts with MON1A (PubMed:23084991). Found in a complex with RMC1, CCZ1, MON1A and MON1B (PubMed:29038162).</text>
</comment>
<comment type="interaction">
    <interactant intactId="EBI-46436054">
        <id>P86791</id>
    </interactant>
    <interactant intactId="EBI-949638">
        <id>Q86VX9</id>
        <label>MON1A</label>
    </interactant>
    <organismsDiffer>false</organismsDiffer>
    <experiments>3</experiments>
</comment>
<comment type="subcellular location">
    <subcellularLocation>
        <location evidence="1">Lysosome membrane</location>
    </subcellularLocation>
</comment>
<comment type="similarity">
    <text evidence="4">Belongs to the CCZ1 family.</text>
</comment>
<accession>P86791</accession>
<accession>A2RU45</accession>
<accession>O95766</accession>
<accession>Q9UG65</accession>
<accession>Q9Y359</accession>
<proteinExistence type="evidence at protein level"/>
<gene>
    <name type="primary">CCZ1</name>
    <name type="synonym">C7orf28A</name>
    <name type="ORF">CGI-43</name>
</gene>
<feature type="initiator methionine" description="Removed" evidence="7 8">
    <location>
        <position position="1"/>
    </location>
</feature>
<feature type="chain" id="PRO_0000401065" description="Vacuolar fusion protein CCZ1 homolog">
    <location>
        <begin position="2"/>
        <end position="482"/>
    </location>
</feature>
<feature type="modified residue" description="N-acetylalanine" evidence="7 8">
    <location>
        <position position="2"/>
    </location>
</feature>
<feature type="modified residue" description="Phosphoserine" evidence="9">
    <location>
        <position position="76"/>
    </location>
</feature>
<feature type="modified residue" description="Phosphoserine" evidence="5 6 9">
    <location>
        <position position="266"/>
    </location>
</feature>
<feature type="sequence conflict" description="In Ref. 1; AAD34038." evidence="4" ref="1">
    <original>AAGAGSGPWAA</original>
    <variation>QRRPGPGAGLGG</variation>
    <location>
        <begin position="5"/>
        <end position="15"/>
    </location>
</feature>
<feature type="sequence conflict" description="In Ref. 1; AAD34038." evidence="4" ref="1">
    <original>N</original>
    <variation>C</variation>
    <location>
        <position position="108"/>
    </location>
</feature>
<feature type="sequence conflict" description="In Ref. 1; AAD34038." evidence="4" ref="1">
    <original>LKAMEDGGVK</original>
    <variation>PESHGRRRVQ</variation>
    <location>
        <begin position="153"/>
        <end position="162"/>
    </location>
</feature>
<feature type="sequence conflict" description="In Ref. 1; AAD34038." evidence="4" ref="1">
    <original>EL</original>
    <variation>DS</variation>
    <location>
        <begin position="448"/>
        <end position="449"/>
    </location>
</feature>
<evidence type="ECO:0000269" key="1">
    <source>
    </source>
</evidence>
<evidence type="ECO:0000269" key="2">
    <source>
    </source>
</evidence>
<evidence type="ECO:0000269" key="3">
    <source>
    </source>
</evidence>
<evidence type="ECO:0000305" key="4"/>
<evidence type="ECO:0007744" key="5">
    <source>
    </source>
</evidence>
<evidence type="ECO:0007744" key="6">
    <source>
    </source>
</evidence>
<evidence type="ECO:0007744" key="7">
    <source>
    </source>
</evidence>
<evidence type="ECO:0007744" key="8">
    <source>
    </source>
</evidence>
<evidence type="ECO:0007744" key="9">
    <source>
    </source>
</evidence>
<name>CCZ1_HUMAN</name>
<reference key="1">
    <citation type="journal article" date="2000" name="Genome Res.">
        <title>Identification of novel human genes evolutionarily conserved in Caenorhabditis elegans by comparative proteomics.</title>
        <authorList>
            <person name="Lai C.-H."/>
            <person name="Chou C.-Y."/>
            <person name="Ch'ang L.-Y."/>
            <person name="Liu C.-S."/>
            <person name="Lin W.-C."/>
        </authorList>
    </citation>
    <scope>NUCLEOTIDE SEQUENCE [LARGE SCALE MRNA]</scope>
</reference>
<reference key="2">
    <citation type="journal article" date="2004" name="Nat. Genet.">
        <title>Complete sequencing and characterization of 21,243 full-length human cDNAs.</title>
        <authorList>
            <person name="Ota T."/>
            <person name="Suzuki Y."/>
            <person name="Nishikawa T."/>
            <person name="Otsuki T."/>
            <person name="Sugiyama T."/>
            <person name="Irie R."/>
            <person name="Wakamatsu A."/>
            <person name="Hayashi K."/>
            <person name="Sato H."/>
            <person name="Nagai K."/>
            <person name="Kimura K."/>
            <person name="Makita H."/>
            <person name="Sekine M."/>
            <person name="Obayashi M."/>
            <person name="Nishi T."/>
            <person name="Shibahara T."/>
            <person name="Tanaka T."/>
            <person name="Ishii S."/>
            <person name="Yamamoto J."/>
            <person name="Saito K."/>
            <person name="Kawai Y."/>
            <person name="Isono Y."/>
            <person name="Nakamura Y."/>
            <person name="Nagahari K."/>
            <person name="Murakami K."/>
            <person name="Yasuda T."/>
            <person name="Iwayanagi T."/>
            <person name="Wagatsuma M."/>
            <person name="Shiratori A."/>
            <person name="Sudo H."/>
            <person name="Hosoiri T."/>
            <person name="Kaku Y."/>
            <person name="Kodaira H."/>
            <person name="Kondo H."/>
            <person name="Sugawara M."/>
            <person name="Takahashi M."/>
            <person name="Kanda K."/>
            <person name="Yokoi T."/>
            <person name="Furuya T."/>
            <person name="Kikkawa E."/>
            <person name="Omura Y."/>
            <person name="Abe K."/>
            <person name="Kamihara K."/>
            <person name="Katsuta N."/>
            <person name="Sato K."/>
            <person name="Tanikawa M."/>
            <person name="Yamazaki M."/>
            <person name="Ninomiya K."/>
            <person name="Ishibashi T."/>
            <person name="Yamashita H."/>
            <person name="Murakawa K."/>
            <person name="Fujimori K."/>
            <person name="Tanai H."/>
            <person name="Kimata M."/>
            <person name="Watanabe M."/>
            <person name="Hiraoka S."/>
            <person name="Chiba Y."/>
            <person name="Ishida S."/>
            <person name="Ono Y."/>
            <person name="Takiguchi S."/>
            <person name="Watanabe S."/>
            <person name="Yosida M."/>
            <person name="Hotuta T."/>
            <person name="Kusano J."/>
            <person name="Kanehori K."/>
            <person name="Takahashi-Fujii A."/>
            <person name="Hara H."/>
            <person name="Tanase T.-O."/>
            <person name="Nomura Y."/>
            <person name="Togiya S."/>
            <person name="Komai F."/>
            <person name="Hara R."/>
            <person name="Takeuchi K."/>
            <person name="Arita M."/>
            <person name="Imose N."/>
            <person name="Musashino K."/>
            <person name="Yuuki H."/>
            <person name="Oshima A."/>
            <person name="Sasaki N."/>
            <person name="Aotsuka S."/>
            <person name="Yoshikawa Y."/>
            <person name="Matsunawa H."/>
            <person name="Ichihara T."/>
            <person name="Shiohata N."/>
            <person name="Sano S."/>
            <person name="Moriya S."/>
            <person name="Momiyama H."/>
            <person name="Satoh N."/>
            <person name="Takami S."/>
            <person name="Terashima Y."/>
            <person name="Suzuki O."/>
            <person name="Nakagawa S."/>
            <person name="Senoh A."/>
            <person name="Mizoguchi H."/>
            <person name="Goto Y."/>
            <person name="Shimizu F."/>
            <person name="Wakebe H."/>
            <person name="Hishigaki H."/>
            <person name="Watanabe T."/>
            <person name="Sugiyama A."/>
            <person name="Takemoto M."/>
            <person name="Kawakami B."/>
            <person name="Yamazaki M."/>
            <person name="Watanabe K."/>
            <person name="Kumagai A."/>
            <person name="Itakura S."/>
            <person name="Fukuzumi Y."/>
            <person name="Fujimori Y."/>
            <person name="Komiyama M."/>
            <person name="Tashiro H."/>
            <person name="Tanigami A."/>
            <person name="Fujiwara T."/>
            <person name="Ono T."/>
            <person name="Yamada K."/>
            <person name="Fujii Y."/>
            <person name="Ozaki K."/>
            <person name="Hirao M."/>
            <person name="Ohmori Y."/>
            <person name="Kawabata A."/>
            <person name="Hikiji T."/>
            <person name="Kobatake N."/>
            <person name="Inagaki H."/>
            <person name="Ikema Y."/>
            <person name="Okamoto S."/>
            <person name="Okitani R."/>
            <person name="Kawakami T."/>
            <person name="Noguchi S."/>
            <person name="Itoh T."/>
            <person name="Shigeta K."/>
            <person name="Senba T."/>
            <person name="Matsumura K."/>
            <person name="Nakajima Y."/>
            <person name="Mizuno T."/>
            <person name="Morinaga M."/>
            <person name="Sasaki M."/>
            <person name="Togashi T."/>
            <person name="Oyama M."/>
            <person name="Hata H."/>
            <person name="Watanabe M."/>
            <person name="Komatsu T."/>
            <person name="Mizushima-Sugano J."/>
            <person name="Satoh T."/>
            <person name="Shirai Y."/>
            <person name="Takahashi Y."/>
            <person name="Nakagawa K."/>
            <person name="Okumura K."/>
            <person name="Nagase T."/>
            <person name="Nomura N."/>
            <person name="Kikuchi H."/>
            <person name="Masuho Y."/>
            <person name="Yamashita R."/>
            <person name="Nakai K."/>
            <person name="Yada T."/>
            <person name="Nakamura Y."/>
            <person name="Ohara O."/>
            <person name="Isogai T."/>
            <person name="Sugano S."/>
        </authorList>
    </citation>
    <scope>NUCLEOTIDE SEQUENCE [LARGE SCALE MRNA]</scope>
    <source>
        <tissue>Testis</tissue>
    </source>
</reference>
<reference key="3">
    <citation type="journal article" date="2003" name="Nature">
        <title>The DNA sequence of human chromosome 7.</title>
        <authorList>
            <person name="Hillier L.W."/>
            <person name="Fulton R.S."/>
            <person name="Fulton L.A."/>
            <person name="Graves T.A."/>
            <person name="Pepin K.H."/>
            <person name="Wagner-McPherson C."/>
            <person name="Layman D."/>
            <person name="Maas J."/>
            <person name="Jaeger S."/>
            <person name="Walker R."/>
            <person name="Wylie K."/>
            <person name="Sekhon M."/>
            <person name="Becker M.C."/>
            <person name="O'Laughlin M.D."/>
            <person name="Schaller M.E."/>
            <person name="Fewell G.A."/>
            <person name="Delehaunty K.D."/>
            <person name="Miner T.L."/>
            <person name="Nash W.E."/>
            <person name="Cordes M."/>
            <person name="Du H."/>
            <person name="Sun H."/>
            <person name="Edwards J."/>
            <person name="Bradshaw-Cordum H."/>
            <person name="Ali J."/>
            <person name="Andrews S."/>
            <person name="Isak A."/>
            <person name="Vanbrunt A."/>
            <person name="Nguyen C."/>
            <person name="Du F."/>
            <person name="Lamar B."/>
            <person name="Courtney L."/>
            <person name="Kalicki J."/>
            <person name="Ozersky P."/>
            <person name="Bielicki L."/>
            <person name="Scott K."/>
            <person name="Holmes A."/>
            <person name="Harkins R."/>
            <person name="Harris A."/>
            <person name="Strong C.M."/>
            <person name="Hou S."/>
            <person name="Tomlinson C."/>
            <person name="Dauphin-Kohlberg S."/>
            <person name="Kozlowicz-Reilly A."/>
            <person name="Leonard S."/>
            <person name="Rohlfing T."/>
            <person name="Rock S.M."/>
            <person name="Tin-Wollam A.-M."/>
            <person name="Abbott A."/>
            <person name="Minx P."/>
            <person name="Maupin R."/>
            <person name="Strowmatt C."/>
            <person name="Latreille P."/>
            <person name="Miller N."/>
            <person name="Johnson D."/>
            <person name="Murray J."/>
            <person name="Woessner J.P."/>
            <person name="Wendl M.C."/>
            <person name="Yang S.-P."/>
            <person name="Schultz B.R."/>
            <person name="Wallis J.W."/>
            <person name="Spieth J."/>
            <person name="Bieri T.A."/>
            <person name="Nelson J.O."/>
            <person name="Berkowicz N."/>
            <person name="Wohldmann P.E."/>
            <person name="Cook L.L."/>
            <person name="Hickenbotham M.T."/>
            <person name="Eldred J."/>
            <person name="Williams D."/>
            <person name="Bedell J.A."/>
            <person name="Mardis E.R."/>
            <person name="Clifton S.W."/>
            <person name="Chissoe S.L."/>
            <person name="Marra M.A."/>
            <person name="Raymond C."/>
            <person name="Haugen E."/>
            <person name="Gillett W."/>
            <person name="Zhou Y."/>
            <person name="James R."/>
            <person name="Phelps K."/>
            <person name="Iadanoto S."/>
            <person name="Bubb K."/>
            <person name="Simms E."/>
            <person name="Levy R."/>
            <person name="Clendenning J."/>
            <person name="Kaul R."/>
            <person name="Kent W.J."/>
            <person name="Furey T.S."/>
            <person name="Baertsch R.A."/>
            <person name="Brent M.R."/>
            <person name="Keibler E."/>
            <person name="Flicek P."/>
            <person name="Bork P."/>
            <person name="Suyama M."/>
            <person name="Bailey J.A."/>
            <person name="Portnoy M.E."/>
            <person name="Torrents D."/>
            <person name="Chinwalla A.T."/>
            <person name="Gish W.R."/>
            <person name="Eddy S.R."/>
            <person name="McPherson J.D."/>
            <person name="Olson M.V."/>
            <person name="Eichler E.E."/>
            <person name="Green E.D."/>
            <person name="Waterston R.H."/>
            <person name="Wilson R.K."/>
        </authorList>
    </citation>
    <scope>NUCLEOTIDE SEQUENCE [LARGE SCALE GENOMIC DNA]</scope>
</reference>
<reference key="4">
    <citation type="journal article" date="2004" name="Genome Res.">
        <title>The status, quality, and expansion of the NIH full-length cDNA project: the Mammalian Gene Collection (MGC).</title>
        <authorList>
            <consortium name="The MGC Project Team"/>
        </authorList>
    </citation>
    <scope>NUCLEOTIDE SEQUENCE [LARGE SCALE MRNA]</scope>
    <source>
        <tissue>Brain</tissue>
    </source>
</reference>
<reference key="5">
    <citation type="journal article" date="2007" name="Traffic">
        <title>Integral and associated lysosomal membrane proteins.</title>
        <authorList>
            <person name="Schroeder B."/>
            <person name="Wrocklage C."/>
            <person name="Pan C."/>
            <person name="Jaeger R."/>
            <person name="Koesters B."/>
            <person name="Schaefer H."/>
            <person name="Elsaesser H.-P."/>
            <person name="Mann M."/>
            <person name="Hasilik A."/>
        </authorList>
    </citation>
    <scope>SUBCELLULAR LOCATION [LARGE SCALE ANALYSIS]</scope>
    <source>
        <tissue>Placenta</tissue>
    </source>
</reference>
<reference key="6">
    <citation type="journal article" date="2008" name="J. Proteome Res.">
        <title>Combining protein-based IMAC, peptide-based IMAC, and MudPIT for efficient phosphoproteomic analysis.</title>
        <authorList>
            <person name="Cantin G.T."/>
            <person name="Yi W."/>
            <person name="Lu B."/>
            <person name="Park S.K."/>
            <person name="Xu T."/>
            <person name="Lee J.-D."/>
            <person name="Yates J.R. III"/>
        </authorList>
    </citation>
    <scope>PHOSPHORYLATION [LARGE SCALE ANALYSIS] AT SER-266</scope>
    <scope>IDENTIFICATION BY MASS SPECTROMETRY [LARGE SCALE ANALYSIS]</scope>
    <source>
        <tissue>Cervix carcinoma</tissue>
    </source>
</reference>
<reference key="7">
    <citation type="journal article" date="2008" name="Proc. Natl. Acad. Sci. U.S.A.">
        <title>A quantitative atlas of mitotic phosphorylation.</title>
        <authorList>
            <person name="Dephoure N."/>
            <person name="Zhou C."/>
            <person name="Villen J."/>
            <person name="Beausoleil S.A."/>
            <person name="Bakalarski C.E."/>
            <person name="Elledge S.J."/>
            <person name="Gygi S.P."/>
        </authorList>
    </citation>
    <scope>PHOSPHORYLATION [LARGE SCALE ANALYSIS] AT SER-266</scope>
    <scope>IDENTIFICATION BY MASS SPECTROMETRY [LARGE SCALE ANALYSIS]</scope>
    <source>
        <tissue>Cervix carcinoma</tissue>
    </source>
</reference>
<reference key="8">
    <citation type="journal article" date="2009" name="Anal. Chem.">
        <title>Lys-N and trypsin cover complementary parts of the phosphoproteome in a refined SCX-based approach.</title>
        <authorList>
            <person name="Gauci S."/>
            <person name="Helbig A.O."/>
            <person name="Slijper M."/>
            <person name="Krijgsveld J."/>
            <person name="Heck A.J."/>
            <person name="Mohammed S."/>
        </authorList>
    </citation>
    <scope>ACETYLATION [LARGE SCALE ANALYSIS] AT ALA-2</scope>
    <scope>CLEAVAGE OF INITIATOR METHIONINE [LARGE SCALE ANALYSIS]</scope>
    <scope>IDENTIFICATION BY MASS SPECTROMETRY [LARGE SCALE ANALYSIS]</scope>
</reference>
<reference key="9">
    <citation type="journal article" date="2011" name="BMC Syst. Biol.">
        <title>Initial characterization of the human central proteome.</title>
        <authorList>
            <person name="Burkard T.R."/>
            <person name="Planyavsky M."/>
            <person name="Kaupe I."/>
            <person name="Breitwieser F.P."/>
            <person name="Buerckstuemmer T."/>
            <person name="Bennett K.L."/>
            <person name="Superti-Furga G."/>
            <person name="Colinge J."/>
        </authorList>
    </citation>
    <scope>IDENTIFICATION BY MASS SPECTROMETRY [LARGE SCALE ANALYSIS]</scope>
</reference>
<reference key="10">
    <citation type="journal article" date="2012" name="Curr. Biol.">
        <title>BLOC-3 mutated in Hermansky-Pudlak syndrome is a Rab32/38 guanine nucleotide exchange factor.</title>
        <authorList>
            <person name="Gerondopoulos A."/>
            <person name="Langemeyer L."/>
            <person name="Liang J.R."/>
            <person name="Linford A."/>
            <person name="Barr F.A."/>
        </authorList>
    </citation>
    <scope>FUNCTION</scope>
    <scope>INTERACTION WITH MON1A</scope>
</reference>
<reference key="11">
    <citation type="journal article" date="2012" name="Mol. Cell. Proteomics">
        <title>Comparative large-scale characterisation of plant vs. mammal proteins reveals similar and idiosyncratic N-alpha acetylation features.</title>
        <authorList>
            <person name="Bienvenut W.V."/>
            <person name="Sumpton D."/>
            <person name="Martinez A."/>
            <person name="Lilla S."/>
            <person name="Espagne C."/>
            <person name="Meinnel T."/>
            <person name="Giglione C."/>
        </authorList>
    </citation>
    <scope>ACETYLATION [LARGE SCALE ANALYSIS] AT ALA-2</scope>
    <scope>CLEAVAGE OF INITIATOR METHIONINE [LARGE SCALE ANALYSIS]</scope>
    <scope>IDENTIFICATION BY MASS SPECTROMETRY [LARGE SCALE ANALYSIS]</scope>
</reference>
<reference key="12">
    <citation type="journal article" date="2013" name="J. Proteome Res.">
        <title>Toward a comprehensive characterization of a human cancer cell phosphoproteome.</title>
        <authorList>
            <person name="Zhou H."/>
            <person name="Di Palma S."/>
            <person name="Preisinger C."/>
            <person name="Peng M."/>
            <person name="Polat A.N."/>
            <person name="Heck A.J."/>
            <person name="Mohammed S."/>
        </authorList>
    </citation>
    <scope>PHOSPHORYLATION [LARGE SCALE ANALYSIS] AT SER-76 AND SER-266</scope>
    <scope>IDENTIFICATION BY MASS SPECTROMETRY [LARGE SCALE ANALYSIS]</scope>
    <source>
        <tissue>Cervix carcinoma</tissue>
        <tissue>Erythroleukemia</tissue>
    </source>
</reference>
<reference key="13">
    <citation type="journal article" date="2017" name="Mol. Cell. Biol.">
        <title>Systematic analysis of human cells lacking ATG8 proteins uncovers roles for GABARAPs and the CCZ1/MON1 regulator C18orf8/RMC1 in macro and selective autophagic flux.</title>
        <authorList>
            <person name="Pontano Vaites L."/>
            <person name="Paulo J.A."/>
            <person name="Huttlin E.L."/>
            <person name="Harper J.W."/>
        </authorList>
    </citation>
    <scope>IDENTIFICATION IN A COMPLEX WITH RMC1; CCZ1; MON1A AND MON1B</scope>
</reference>
<dbReference type="EMBL" id="AF151801">
    <property type="protein sequence ID" value="AAD34038.1"/>
    <property type="molecule type" value="mRNA"/>
</dbReference>
<dbReference type="EMBL" id="AK292326">
    <property type="protein sequence ID" value="BAF85015.1"/>
    <property type="molecule type" value="mRNA"/>
</dbReference>
<dbReference type="EMBL" id="AC004983">
    <property type="protein sequence ID" value="AAQ96868.1"/>
    <property type="molecule type" value="Genomic_DNA"/>
</dbReference>
<dbReference type="EMBL" id="BC132749">
    <property type="protein sequence ID" value="AAI32750.1"/>
    <property type="molecule type" value="mRNA"/>
</dbReference>
<dbReference type="EMBL" id="BC132751">
    <property type="protein sequence ID" value="AAI32752.1"/>
    <property type="molecule type" value="mRNA"/>
</dbReference>
<dbReference type="CCDS" id="CCDS34597.1"/>
<dbReference type="PIR" id="T08806">
    <property type="entry name" value="T08806"/>
</dbReference>
<dbReference type="RefSeq" id="NP_056437.4">
    <property type="nucleotide sequence ID" value="NM_015622.5"/>
</dbReference>
<dbReference type="RefSeq" id="NP_932765.1">
    <property type="nucleotide sequence ID" value="NM_198097.3"/>
</dbReference>
<dbReference type="SMR" id="P86791"/>
<dbReference type="BioGRID" id="119643">
    <property type="interactions" value="99"/>
</dbReference>
<dbReference type="BioGRID" id="128773">
    <property type="interactions" value="17"/>
</dbReference>
<dbReference type="ComplexPortal" id="CPX-8152">
    <property type="entry name" value="MON1-CCZ1 guanyl-nucleotide exchange factor complex, MON1B variant"/>
</dbReference>
<dbReference type="ComplexPortal" id="CPX-8153">
    <property type="entry name" value="MON1-CCZ1 guanyl-nucleotide exchange factor complex, MON1A variant"/>
</dbReference>
<dbReference type="CORUM" id="P86791"/>
<dbReference type="FunCoup" id="P86791">
    <property type="interactions" value="3248"/>
</dbReference>
<dbReference type="IntAct" id="P86791">
    <property type="interactions" value="6"/>
</dbReference>
<dbReference type="iPTMnet" id="P86791"/>
<dbReference type="PhosphoSitePlus" id="P86791"/>
<dbReference type="BioMuta" id="CCZ1"/>
<dbReference type="DMDM" id="310943082"/>
<dbReference type="jPOST" id="P86791"/>
<dbReference type="MassIVE" id="P86791"/>
<dbReference type="Pumba" id="P86791"/>
<dbReference type="Antibodypedia" id="57705">
    <property type="antibodies" value="112 antibodies from 21 providers"/>
</dbReference>
<dbReference type="DNASU" id="51622"/>
<dbReference type="Ensembl" id="ENST00000325974.9">
    <property type="protein sequence ID" value="ENSP00000325681.6"/>
    <property type="gene ID" value="ENSG00000122674.12"/>
</dbReference>
<dbReference type="GeneID" id="221960"/>
<dbReference type="GeneID" id="51622"/>
<dbReference type="KEGG" id="hsa:221960"/>
<dbReference type="KEGG" id="hsa:51622"/>
<dbReference type="MANE-Select" id="ENST00000325974.9">
    <property type="protein sequence ID" value="ENSP00000325681.6"/>
    <property type="RefSeq nucleotide sequence ID" value="NM_015622.6"/>
    <property type="RefSeq protein sequence ID" value="NP_056437.4"/>
</dbReference>
<dbReference type="UCSC" id="uc003spf.4">
    <property type="organism name" value="human"/>
</dbReference>
<dbReference type="AGR" id="HGNC:21691"/>
<dbReference type="AGR" id="HGNC:21717"/>
<dbReference type="CTD" id="221960"/>
<dbReference type="CTD" id="51622"/>
<dbReference type="DisGeNET" id="51622"/>
<dbReference type="GeneCards" id="CCZ1"/>
<dbReference type="HGNC" id="HGNC:21691">
    <property type="gene designation" value="CCZ1"/>
</dbReference>
<dbReference type="HPA" id="ENSG00000122674">
    <property type="expression patterns" value="Low tissue specificity"/>
</dbReference>
<dbReference type="MIM" id="620660">
    <property type="type" value="gene"/>
</dbReference>
<dbReference type="neXtProt" id="NX_P86791"/>
<dbReference type="OpenTargets" id="ENSG00000122674"/>
<dbReference type="VEuPathDB" id="HostDB:ENSG00000122674"/>
<dbReference type="GeneTree" id="ENSGT00390000004713"/>
<dbReference type="HOGENOM" id="CLU_037828_2_0_1"/>
<dbReference type="InParanoid" id="P86791"/>
<dbReference type="OMA" id="DCQALHT"/>
<dbReference type="OrthoDB" id="240546at2759"/>
<dbReference type="PAN-GO" id="P86791">
    <property type="GO annotations" value="2 GO annotations based on evolutionary models"/>
</dbReference>
<dbReference type="PhylomeDB" id="P86791"/>
<dbReference type="TreeFam" id="TF314962"/>
<dbReference type="PathwayCommons" id="P86791"/>
<dbReference type="Reactome" id="R-HSA-8876198">
    <property type="pathway name" value="RAB GEFs exchange GTP for GDP on RABs"/>
</dbReference>
<dbReference type="SignaLink" id="P86791"/>
<dbReference type="BioGRID-ORCS" id="221960">
    <property type="hits" value="46 hits in 1021 CRISPR screens"/>
</dbReference>
<dbReference type="BioGRID-ORCS" id="51622">
    <property type="hits" value="28 hits in 372 CRISPR screens"/>
</dbReference>
<dbReference type="ChiTaRS" id="CCZ1">
    <property type="organism name" value="human"/>
</dbReference>
<dbReference type="Pharos" id="P86791">
    <property type="development level" value="Tbio"/>
</dbReference>
<dbReference type="PRO" id="PR:P86791"/>
<dbReference type="Proteomes" id="UP000005640">
    <property type="component" value="Chromosome 7"/>
</dbReference>
<dbReference type="RNAct" id="P86791">
    <property type="molecule type" value="protein"/>
</dbReference>
<dbReference type="Bgee" id="ENSG00000122674">
    <property type="expression patterns" value="Expressed in mucosa of transverse colon and 98 other cell types or tissues"/>
</dbReference>
<dbReference type="ExpressionAtlas" id="P86791">
    <property type="expression patterns" value="baseline and differential"/>
</dbReference>
<dbReference type="GO" id="GO:0005829">
    <property type="term" value="C:cytosol"/>
    <property type="evidence" value="ECO:0000304"/>
    <property type="project" value="Reactome"/>
</dbReference>
<dbReference type="GO" id="GO:0043231">
    <property type="term" value="C:intracellular membrane-bounded organelle"/>
    <property type="evidence" value="ECO:0000314"/>
    <property type="project" value="HPA"/>
</dbReference>
<dbReference type="GO" id="GO:0005765">
    <property type="term" value="C:lysosomal membrane"/>
    <property type="evidence" value="ECO:0007669"/>
    <property type="project" value="UniProtKB-SubCell"/>
</dbReference>
<dbReference type="GO" id="GO:0035658">
    <property type="term" value="C:Mon1-Ccz1 complex"/>
    <property type="evidence" value="ECO:0000314"/>
    <property type="project" value="UniProtKB"/>
</dbReference>
<dbReference type="GO" id="GO:0005085">
    <property type="term" value="F:guanyl-nucleotide exchange factor activity"/>
    <property type="evidence" value="ECO:0000314"/>
    <property type="project" value="UniProtKB"/>
</dbReference>
<dbReference type="GO" id="GO:0016192">
    <property type="term" value="P:vesicle-mediated transport"/>
    <property type="evidence" value="ECO:0000318"/>
    <property type="project" value="GO_Central"/>
</dbReference>
<dbReference type="InterPro" id="IPR013176">
    <property type="entry name" value="Ccz1"/>
</dbReference>
<dbReference type="InterPro" id="IPR043987">
    <property type="entry name" value="CCZ1/INTU/HSP4_longin_1"/>
</dbReference>
<dbReference type="InterPro" id="IPR043989">
    <property type="entry name" value="CCZ1/INTU/HSP4_longin_3"/>
</dbReference>
<dbReference type="InterPro" id="IPR043988">
    <property type="entry name" value="CCZ1/INTU_longin_2"/>
</dbReference>
<dbReference type="PANTHER" id="PTHR13056">
    <property type="entry name" value="VACUOLAR FUSION PROTEIN CCZ1 HOMOLOG-RELATED"/>
    <property type="match status" value="1"/>
</dbReference>
<dbReference type="PANTHER" id="PTHR13056:SF0">
    <property type="entry name" value="VACUOLAR FUSION PROTEIN CCZ1 HOMOLOG-RELATED"/>
    <property type="match status" value="1"/>
</dbReference>
<dbReference type="Pfam" id="PF19031">
    <property type="entry name" value="Intu_longin_1"/>
    <property type="match status" value="1"/>
</dbReference>
<dbReference type="Pfam" id="PF19032">
    <property type="entry name" value="Intu_longin_2"/>
    <property type="match status" value="1"/>
</dbReference>
<dbReference type="Pfam" id="PF19033">
    <property type="entry name" value="Intu_longin_3"/>
    <property type="match status" value="1"/>
</dbReference>
<keyword id="KW-0007">Acetylation</keyword>
<keyword id="KW-0344">Guanine-nucleotide releasing factor</keyword>
<keyword id="KW-0458">Lysosome</keyword>
<keyword id="KW-0472">Membrane</keyword>
<keyword id="KW-0597">Phosphoprotein</keyword>
<keyword id="KW-1185">Reference proteome</keyword>
<sequence length="482" mass="55866">MAAAAAGAGSGPWAAQEKQFPPALLSFFIYNPRFGPREGQEENKILFYHPNEVEKNEKIRNVGLCEAIVQFTRTFSPSKPAKSLHTQKNRQFFNEPEENFWMVMVVRNPIIEKQSKDGKPVIEYQEEELLDKVYSSVLRQCYSMYKLFNGTFLKAMEDGGVKLLKERLEKFFHRYLQTLHLQSCDLLDIFGGISFFPLDKMTYLKIQSFINRMEESLNIVKYTAFLYNDQLIWSGLEQDDMRILYKYLTTSLFPRHIEPELAGRDSPIRAEMPGNLQHYGRFLTGPLNLNDPDAKCRFPKIFVNTDDTYEELHLIVYKAMSAAVCFMIDASVHPTLDFCRRLDSIVGPQLTVLASDICEQFNINKRMSGSEKEPQFKFIYFNHMNLAEKSTVHMRKTPSVSLTSVHPDLMKILGDINSDFTRVDEDEEIIVKAMSDYWVVGKKSDRRELYVILNQKNANLIEVNEEVKKLCATQFNNIFFLD</sequence>
<organism>
    <name type="scientific">Homo sapiens</name>
    <name type="common">Human</name>
    <dbReference type="NCBI Taxonomy" id="9606"/>
    <lineage>
        <taxon>Eukaryota</taxon>
        <taxon>Metazoa</taxon>
        <taxon>Chordata</taxon>
        <taxon>Craniata</taxon>
        <taxon>Vertebrata</taxon>
        <taxon>Euteleostomi</taxon>
        <taxon>Mammalia</taxon>
        <taxon>Eutheria</taxon>
        <taxon>Euarchontoglires</taxon>
        <taxon>Primates</taxon>
        <taxon>Haplorrhini</taxon>
        <taxon>Catarrhini</taxon>
        <taxon>Hominidae</taxon>
        <taxon>Homo</taxon>
    </lineage>
</organism>